<sequence>MKNSAAREAFKGANHPAGMVSEEELKALVGGNDVNPETTPATTSSWTCITAGVTVSASLCPTTKCTSRC</sequence>
<keyword id="KW-0044">Antibiotic</keyword>
<keyword id="KW-0929">Antimicrobial</keyword>
<keyword id="KW-0078">Bacteriocin</keyword>
<keyword id="KW-0134">Cell wall</keyword>
<keyword id="KW-0425">Lantibiotic</keyword>
<keyword id="KW-1185">Reference proteome</keyword>
<keyword id="KW-0964">Secreted</keyword>
<keyword id="KW-0883">Thioether bond</keyword>
<feature type="propeptide" id="PRO_0000399040" evidence="2">
    <location>
        <begin position="1"/>
        <end position="37"/>
    </location>
</feature>
<feature type="peptide" id="PRO_0000399041" description="Lantibiotic lichenicidin A2" evidence="2">
    <location>
        <begin position="38"/>
        <end position="69"/>
    </location>
</feature>
<feature type="modified residue" description="2-oxobutanoic acid" evidence="2">
    <location>
        <position position="38"/>
    </location>
</feature>
<feature type="modified residue" description="(Z)-2,3-didehydrobutyrine" evidence="2">
    <location>
        <position position="39"/>
    </location>
</feature>
<feature type="modified residue" description="(Z)-2,3-didehydrobutyrine" evidence="2">
    <location>
        <position position="42"/>
    </location>
</feature>
<feature type="modified residue" description="(Z)-2,3-didehydrobutyrine" evidence="2">
    <location>
        <position position="43"/>
    </location>
</feature>
<feature type="modified residue" description="2,3-didehydroalanine (Ser)" evidence="2">
    <location>
        <position position="45"/>
    </location>
</feature>
<feature type="modified residue" description="(Z)-2,3-didehydrobutyrine" evidence="2">
    <location>
        <position position="50"/>
    </location>
</feature>
<feature type="modified residue" description="(Z)-2,3-didehydrobutyrine" evidence="2">
    <location>
        <position position="54"/>
    </location>
</feature>
<feature type="modified residue" description="(Z)-2,3-didehydrobutyrine" evidence="2">
    <location>
        <position position="63"/>
    </location>
</feature>
<feature type="cross-link" description="Lanthionine (Ser-Cys)" evidence="2">
    <location>
        <begin position="44"/>
        <end position="48"/>
    </location>
</feature>
<feature type="cross-link" description="Lanthionine (Ser-Cys)" evidence="2">
    <location>
        <begin position="56"/>
        <end position="60"/>
    </location>
</feature>
<feature type="cross-link" description="Beta-methyllanthionine (Thr-Cys)" evidence="2">
    <location>
        <begin position="62"/>
        <end position="65"/>
    </location>
</feature>
<feature type="cross-link" description="Beta-methyllanthionine (Thr-Cys)" evidence="2">
    <location>
        <begin position="66"/>
        <end position="69"/>
    </location>
</feature>
<proteinExistence type="evidence at protein level"/>
<reference evidence="7" key="1">
    <citation type="journal article" date="2004" name="J. Mol. Microbiol. Biotechnol.">
        <title>The complete genome sequence of Bacillus licheniformis DSM13, an organism with great industrial potential.</title>
        <authorList>
            <person name="Veith B."/>
            <person name="Herzberg C."/>
            <person name="Steckel S."/>
            <person name="Feesche J."/>
            <person name="Maurer K.H."/>
            <person name="Ehrenreich P."/>
            <person name="Baeumer S."/>
            <person name="Henne A."/>
            <person name="Liesegang H."/>
            <person name="Merkl R."/>
            <person name="Ehrenreich A."/>
            <person name="Gottschalk G."/>
        </authorList>
    </citation>
    <scope>NUCLEOTIDE SEQUENCE [LARGE SCALE GENOMIC DNA]</scope>
    <source>
        <strain>ATCC 14580 / DSM 13 / JCM 2505 / CCUG 7422 / NBRC 12200 / NCIMB 9375 / NCTC 10341 / NRRL NRS-1264 / Gibson 46</strain>
    </source>
</reference>
<reference evidence="7" key="2">
    <citation type="journal article" date="2004" name="Genome Biol.">
        <title>Complete genome sequence of the industrial bacterium Bacillus licheniformis and comparisons with closely related Bacillus species.</title>
        <authorList>
            <person name="Rey M.W."/>
            <person name="Ramaiya P."/>
            <person name="Nelson B.A."/>
            <person name="Brody-Karpin S.D."/>
            <person name="Zaretsky E.J."/>
            <person name="Tang M."/>
            <person name="Lopez de Leon A."/>
            <person name="Xiang H."/>
            <person name="Gusti V."/>
            <person name="Clausen I.G."/>
            <person name="Olsen P.B."/>
            <person name="Rasmussen M.D."/>
            <person name="Andersen J.T."/>
            <person name="Joergensen P.L."/>
            <person name="Larsen T.S."/>
            <person name="Sorokin A."/>
            <person name="Bolotin A."/>
            <person name="Lapidus A."/>
            <person name="Galleron N."/>
            <person name="Ehrlich S.D."/>
            <person name="Berka R.M."/>
        </authorList>
    </citation>
    <scope>NUCLEOTIDE SEQUENCE [LARGE SCALE GENOMIC DNA]</scope>
    <source>
        <strain>ATCC 14580 / DSM 13 / JCM 2505 / CCUG 7422 / NBRC 12200 / NCIMB 9375 / NCTC 10341 / NRRL NRS-1264 / Gibson 46</strain>
    </source>
</reference>
<reference evidence="7" key="3">
    <citation type="journal article" date="2009" name="Appl. Environ. Microbiol.">
        <title>Identification of a novel two-peptide lantibiotic, lichenicidin, following rational genome mining for LanM proteins.</title>
        <authorList>
            <person name="Begley M."/>
            <person name="Cotter P.D."/>
            <person name="Hill C."/>
            <person name="Ross R.P."/>
        </authorList>
    </citation>
    <scope>IDENTIFICATION</scope>
    <scope>FUNCTION</scope>
    <scope>SUBCELLULAR LOCATION</scope>
    <scope>MASS SPECTROMETRY</scope>
</reference>
<reference evidence="7" key="4">
    <citation type="journal article" date="2009" name="PLoS ONE">
        <title>Production of the novel two-peptide lantibiotic lichenicidin by Bacillus licheniformis DSM 13.</title>
        <authorList>
            <person name="Dischinger J."/>
            <person name="Josten M."/>
            <person name="Szekat C."/>
            <person name="Sahl H.G."/>
            <person name="Bierbaum G."/>
        </authorList>
    </citation>
    <scope>IDENTIFICATION</scope>
    <scope>FUNCTION</scope>
    <scope>SUBCELLULAR LOCATION</scope>
    <scope>MASS SPECTROMETRY</scope>
</reference>
<protein>
    <recommendedName>
        <fullName evidence="5 6">Lantibiotic lichenicidin A2</fullName>
        <shortName evidence="2">LchA2</shortName>
    </recommendedName>
    <alternativeName>
        <fullName evidence="5">BliA2</fullName>
    </alternativeName>
</protein>
<organism>
    <name type="scientific">Bacillus licheniformis (strain ATCC 14580 / DSM 13 / JCM 2505 / CCUG 7422 / NBRC 12200 / NCIMB 9375 / NCTC 10341 / NRRL NRS-1264 / Gibson 46)</name>
    <dbReference type="NCBI Taxonomy" id="279010"/>
    <lineage>
        <taxon>Bacteria</taxon>
        <taxon>Bacillati</taxon>
        <taxon>Bacillota</taxon>
        <taxon>Bacilli</taxon>
        <taxon>Bacillales</taxon>
        <taxon>Bacillaceae</taxon>
        <taxon>Bacillus</taxon>
    </lineage>
</organism>
<gene>
    <name evidence="5" type="primary">lanA2</name>
    <name evidence="6" type="synonym">licA2</name>
    <name type="ordered locus">BLi04126.1</name>
    <name type="ordered locus">BL05375.1</name>
</gene>
<comment type="function">
    <text evidence="3 4">Lanthionine-containing peptide antibiotic (lantibiotic) active on Gram-positive bacteria. The bactericidal activity of lantibiotics is based on depolarization of energized bacterial cytoplasmic membranes, initiated by the formation of aqueous transmembrane pores. When present individually, LchA2 exhibits activity towards L.lactis HP. When combined with LchA1, it displays activity towards a broad spectrum of non-pathogenic and pathogenic Gram-positive bacteria including strains of L.monocytogenes, methicillin-resistant S.aureus, S.pneumoniae and strains of vancomycin-resistant enterococci, but not towards E.faecium L4001 and BM4147-1. Combined LchA1 and LchA2 peptides also inhibit Bacillus sp. HIL-Y85/54728, L.lactis DPC3417 and B.halodurans C-125, which produce lantibiotics themselves. Inactivated by proteinase K and pronase E, but not by trypsin and chymotrypsin.</text>
</comment>
<comment type="subcellular location">
    <subcellularLocation>
        <location evidence="3 4">Secreted</location>
        <location evidence="3 4">Cell wall</location>
    </subcellularLocation>
</comment>
<comment type="PTM">
    <text evidence="1">Maturation of lantibiotics involves the enzymatic conversion of Thr, and Ser into dehydrated AA and the formation of thioether bonds with cysteine. This is followed by membrane translocation and cleavage of the modified precursor (By similarity).</text>
</comment>
<comment type="mass spectrometry"/>
<comment type="mass spectrometry"/>
<name>LANLB_BACLD</name>
<accession>P86720</accession>
<evidence type="ECO:0000250" key="1">
    <source>
        <dbReference type="UniProtKB" id="O87237"/>
    </source>
</evidence>
<evidence type="ECO:0000250" key="2">
    <source>
        <dbReference type="UniProtKB" id="P86476"/>
    </source>
</evidence>
<evidence type="ECO:0000269" key="3">
    <source>
    </source>
</evidence>
<evidence type="ECO:0000269" key="4">
    <source>
    </source>
</evidence>
<evidence type="ECO:0000303" key="5">
    <source>
    </source>
</evidence>
<evidence type="ECO:0000303" key="6">
    <source>
    </source>
</evidence>
<evidence type="ECO:0000305" key="7"/>
<dbReference type="EMBL" id="AE017333">
    <property type="status" value="NOT_ANNOTATED_CDS"/>
    <property type="molecule type" value="Genomic_DNA"/>
</dbReference>
<dbReference type="EMBL" id="CP000002">
    <property type="status" value="NOT_ANNOTATED_CDS"/>
    <property type="molecule type" value="Genomic_DNA"/>
</dbReference>
<dbReference type="SMR" id="P86720"/>
<dbReference type="Proteomes" id="UP000000606">
    <property type="component" value="Chromosome"/>
</dbReference>
<dbReference type="GO" id="GO:0005576">
    <property type="term" value="C:extracellular region"/>
    <property type="evidence" value="ECO:0007669"/>
    <property type="project" value="UniProtKB-KW"/>
</dbReference>
<dbReference type="GO" id="GO:0009275">
    <property type="term" value="C:Gram-positive-bacterium-type cell wall"/>
    <property type="evidence" value="ECO:0000314"/>
    <property type="project" value="UniProtKB"/>
</dbReference>
<dbReference type="GO" id="GO:0005102">
    <property type="term" value="F:signaling receptor binding"/>
    <property type="evidence" value="ECO:0007669"/>
    <property type="project" value="UniProtKB-KW"/>
</dbReference>
<dbReference type="GO" id="GO:0050830">
    <property type="term" value="P:defense response to Gram-positive bacterium"/>
    <property type="evidence" value="ECO:0000314"/>
    <property type="project" value="UniProtKB"/>
</dbReference>
<dbReference type="GO" id="GO:0031640">
    <property type="term" value="P:killing of cells of another organism"/>
    <property type="evidence" value="ECO:0007669"/>
    <property type="project" value="UniProtKB-KW"/>
</dbReference>
<dbReference type="InterPro" id="IPR027632">
    <property type="entry name" value="Lant_2_A2"/>
</dbReference>
<dbReference type="NCBIfam" id="NF038161">
    <property type="entry name" value="lant_II_LchA2"/>
    <property type="match status" value="1"/>
</dbReference>
<dbReference type="NCBIfam" id="TIGR03893">
    <property type="entry name" value="lant_SP_1948"/>
    <property type="match status" value="1"/>
</dbReference>
<dbReference type="Pfam" id="PF16934">
    <property type="entry name" value="Mersacidin"/>
    <property type="match status" value="1"/>
</dbReference>